<gene>
    <name evidence="1" type="primary">rplS</name>
    <name type="ordered locus">Shewmr4_2835</name>
</gene>
<name>RL19_SHESM</name>
<feature type="chain" id="PRO_1000049745" description="Large ribosomal subunit protein bL19">
    <location>
        <begin position="1"/>
        <end position="117"/>
    </location>
</feature>
<dbReference type="EMBL" id="CP000446">
    <property type="protein sequence ID" value="ABI39906.1"/>
    <property type="molecule type" value="Genomic_DNA"/>
</dbReference>
<dbReference type="RefSeq" id="WP_006080791.1">
    <property type="nucleotide sequence ID" value="NC_008321.1"/>
</dbReference>
<dbReference type="SMR" id="Q0HGB1"/>
<dbReference type="GeneID" id="94728937"/>
<dbReference type="KEGG" id="she:Shewmr4_2835"/>
<dbReference type="HOGENOM" id="CLU_103507_2_2_6"/>
<dbReference type="GO" id="GO:0022625">
    <property type="term" value="C:cytosolic large ribosomal subunit"/>
    <property type="evidence" value="ECO:0007669"/>
    <property type="project" value="TreeGrafter"/>
</dbReference>
<dbReference type="GO" id="GO:0003735">
    <property type="term" value="F:structural constituent of ribosome"/>
    <property type="evidence" value="ECO:0007669"/>
    <property type="project" value="InterPro"/>
</dbReference>
<dbReference type="GO" id="GO:0006412">
    <property type="term" value="P:translation"/>
    <property type="evidence" value="ECO:0007669"/>
    <property type="project" value="UniProtKB-UniRule"/>
</dbReference>
<dbReference type="FunFam" id="2.30.30.790:FF:000001">
    <property type="entry name" value="50S ribosomal protein L19"/>
    <property type="match status" value="1"/>
</dbReference>
<dbReference type="Gene3D" id="2.30.30.790">
    <property type="match status" value="1"/>
</dbReference>
<dbReference type="HAMAP" id="MF_00402">
    <property type="entry name" value="Ribosomal_bL19"/>
    <property type="match status" value="1"/>
</dbReference>
<dbReference type="InterPro" id="IPR001857">
    <property type="entry name" value="Ribosomal_bL19"/>
</dbReference>
<dbReference type="InterPro" id="IPR018257">
    <property type="entry name" value="Ribosomal_bL19_CS"/>
</dbReference>
<dbReference type="InterPro" id="IPR038657">
    <property type="entry name" value="Ribosomal_bL19_sf"/>
</dbReference>
<dbReference type="InterPro" id="IPR008991">
    <property type="entry name" value="Translation_prot_SH3-like_sf"/>
</dbReference>
<dbReference type="NCBIfam" id="TIGR01024">
    <property type="entry name" value="rplS_bact"/>
    <property type="match status" value="1"/>
</dbReference>
<dbReference type="PANTHER" id="PTHR15680:SF9">
    <property type="entry name" value="LARGE RIBOSOMAL SUBUNIT PROTEIN BL19M"/>
    <property type="match status" value="1"/>
</dbReference>
<dbReference type="PANTHER" id="PTHR15680">
    <property type="entry name" value="RIBOSOMAL PROTEIN L19"/>
    <property type="match status" value="1"/>
</dbReference>
<dbReference type="Pfam" id="PF01245">
    <property type="entry name" value="Ribosomal_L19"/>
    <property type="match status" value="1"/>
</dbReference>
<dbReference type="PIRSF" id="PIRSF002191">
    <property type="entry name" value="Ribosomal_L19"/>
    <property type="match status" value="1"/>
</dbReference>
<dbReference type="PRINTS" id="PR00061">
    <property type="entry name" value="RIBOSOMALL19"/>
</dbReference>
<dbReference type="SUPFAM" id="SSF50104">
    <property type="entry name" value="Translation proteins SH3-like domain"/>
    <property type="match status" value="1"/>
</dbReference>
<dbReference type="PROSITE" id="PS01015">
    <property type="entry name" value="RIBOSOMAL_L19"/>
    <property type="match status" value="1"/>
</dbReference>
<keyword id="KW-0687">Ribonucleoprotein</keyword>
<keyword id="KW-0689">Ribosomal protein</keyword>
<accession>Q0HGB1</accession>
<protein>
    <recommendedName>
        <fullName evidence="1">Large ribosomal subunit protein bL19</fullName>
    </recommendedName>
    <alternativeName>
        <fullName evidence="2">50S ribosomal protein L19</fullName>
    </alternativeName>
</protein>
<reference key="1">
    <citation type="submission" date="2006-08" db="EMBL/GenBank/DDBJ databases">
        <title>Complete sequence of Shewanella sp. MR-4.</title>
        <authorList>
            <consortium name="US DOE Joint Genome Institute"/>
            <person name="Copeland A."/>
            <person name="Lucas S."/>
            <person name="Lapidus A."/>
            <person name="Barry K."/>
            <person name="Detter J.C."/>
            <person name="Glavina del Rio T."/>
            <person name="Hammon N."/>
            <person name="Israni S."/>
            <person name="Dalin E."/>
            <person name="Tice H."/>
            <person name="Pitluck S."/>
            <person name="Kiss H."/>
            <person name="Brettin T."/>
            <person name="Bruce D."/>
            <person name="Han C."/>
            <person name="Tapia R."/>
            <person name="Gilna P."/>
            <person name="Schmutz J."/>
            <person name="Larimer F."/>
            <person name="Land M."/>
            <person name="Hauser L."/>
            <person name="Kyrpides N."/>
            <person name="Mikhailova N."/>
            <person name="Nealson K."/>
            <person name="Konstantinidis K."/>
            <person name="Klappenbach J."/>
            <person name="Tiedje J."/>
            <person name="Richardson P."/>
        </authorList>
    </citation>
    <scope>NUCLEOTIDE SEQUENCE [LARGE SCALE GENOMIC DNA]</scope>
    <source>
        <strain>MR-4</strain>
    </source>
</reference>
<organism>
    <name type="scientific">Shewanella sp. (strain MR-4)</name>
    <dbReference type="NCBI Taxonomy" id="60480"/>
    <lineage>
        <taxon>Bacteria</taxon>
        <taxon>Pseudomonadati</taxon>
        <taxon>Pseudomonadota</taxon>
        <taxon>Gammaproteobacteria</taxon>
        <taxon>Alteromonadales</taxon>
        <taxon>Shewanellaceae</taxon>
        <taxon>Shewanella</taxon>
    </lineage>
</organism>
<evidence type="ECO:0000255" key="1">
    <source>
        <dbReference type="HAMAP-Rule" id="MF_00402"/>
    </source>
</evidence>
<evidence type="ECO:0000305" key="2"/>
<sequence>MNNIIKMLNDEQMKQDVPAFGAGDTVVVQVRVKEGDKERLQAFEGVVIAKRNRGLHSAFTVRKISNGEGVERAFQTHSPLIASIEVKRRGRVRRAKLYYLRDRSGKSARIREKLATK</sequence>
<comment type="function">
    <text evidence="1">This protein is located at the 30S-50S ribosomal subunit interface and may play a role in the structure and function of the aminoacyl-tRNA binding site.</text>
</comment>
<comment type="similarity">
    <text evidence="1">Belongs to the bacterial ribosomal protein bL19 family.</text>
</comment>
<proteinExistence type="inferred from homology"/>